<proteinExistence type="inferred from homology"/>
<comment type="similarity">
    <text evidence="1">Belongs to the UPF0284 family.</text>
</comment>
<sequence>MQKSYLGIKLFGSKGNQKLFFEKVDALQKEINNFIFYLVIAGTETSQIQGISAAGIDSKARRRTALADAEFLLFGAYKDHKYKLPFLNSGVTPALISYVCKKLICASQIVVPIGIKEKPYFSHLTVENYLAGPAKCLTTGKSMNKERVLSLYKKGLEIGKSTKQPIFISESVPGGTTTAQAVMEAFGLNVNNLIGSSLINAPRALKTKVIKAGLLKANLKNNFDSLDVISSVGDPFQAFSLGLLIGARLAKQSVVLSGGSQMLAVILLALEFIDSTEKQEFIDLVFIATTGWLVKDNSLGDLLDLITEKHNVNLLGLASPLNFKSSKFKELSDYEIGYVKEGVGAGGMSILAFLKGFSNEEIVSSCQVNLERMKDLGQISINKDC</sequence>
<accession>P59920</accession>
<evidence type="ECO:0000255" key="1">
    <source>
        <dbReference type="HAMAP-Rule" id="MF_01086"/>
    </source>
</evidence>
<protein>
    <recommendedName>
        <fullName evidence="1">UPF0284 protein PMM0439</fullName>
    </recommendedName>
</protein>
<reference key="1">
    <citation type="journal article" date="2003" name="Nature">
        <title>Genome divergence in two Prochlorococcus ecotypes reflects oceanic niche differentiation.</title>
        <authorList>
            <person name="Rocap G."/>
            <person name="Larimer F.W."/>
            <person name="Lamerdin J.E."/>
            <person name="Malfatti S."/>
            <person name="Chain P."/>
            <person name="Ahlgren N.A."/>
            <person name="Arellano A."/>
            <person name="Coleman M."/>
            <person name="Hauser L."/>
            <person name="Hess W.R."/>
            <person name="Johnson Z.I."/>
            <person name="Land M.L."/>
            <person name="Lindell D."/>
            <person name="Post A.F."/>
            <person name="Regala W."/>
            <person name="Shah M."/>
            <person name="Shaw S.L."/>
            <person name="Steglich C."/>
            <person name="Sullivan M.B."/>
            <person name="Ting C.S."/>
            <person name="Tolonen A."/>
            <person name="Webb E.A."/>
            <person name="Zinser E.R."/>
            <person name="Chisholm S.W."/>
        </authorList>
    </citation>
    <scope>NUCLEOTIDE SEQUENCE [LARGE SCALE GENOMIC DNA]</scope>
    <source>
        <strain>CCMP1986 / NIES-2087 / MED4</strain>
    </source>
</reference>
<organism>
    <name type="scientific">Prochlorococcus marinus subsp. pastoris (strain CCMP1986 / NIES-2087 / MED4)</name>
    <dbReference type="NCBI Taxonomy" id="59919"/>
    <lineage>
        <taxon>Bacteria</taxon>
        <taxon>Bacillati</taxon>
        <taxon>Cyanobacteriota</taxon>
        <taxon>Cyanophyceae</taxon>
        <taxon>Synechococcales</taxon>
        <taxon>Prochlorococcaceae</taxon>
        <taxon>Prochlorococcus</taxon>
    </lineage>
</organism>
<gene>
    <name type="ordered locus">PMM0439</name>
</gene>
<feature type="chain" id="PRO_0000151043" description="UPF0284 protein PMM0439">
    <location>
        <begin position="1"/>
        <end position="385"/>
    </location>
</feature>
<name>Y439_PROMP</name>
<dbReference type="EMBL" id="BX548174">
    <property type="protein sequence ID" value="CAE18898.1"/>
    <property type="molecule type" value="Genomic_DNA"/>
</dbReference>
<dbReference type="RefSeq" id="WP_011132075.1">
    <property type="nucleotide sequence ID" value="NC_005072.1"/>
</dbReference>
<dbReference type="SMR" id="P59920"/>
<dbReference type="STRING" id="59919.PMM0439"/>
<dbReference type="KEGG" id="pmm:PMM0439"/>
<dbReference type="eggNOG" id="COG2038">
    <property type="taxonomic scope" value="Bacteria"/>
</dbReference>
<dbReference type="HOGENOM" id="CLU_053134_1_0_3"/>
<dbReference type="OrthoDB" id="418257at2"/>
<dbReference type="Proteomes" id="UP000001026">
    <property type="component" value="Chromosome"/>
</dbReference>
<dbReference type="GO" id="GO:0008939">
    <property type="term" value="F:nicotinate-nucleotide-dimethylbenzimidazole phosphoribosyltransferase activity"/>
    <property type="evidence" value="ECO:0007669"/>
    <property type="project" value="InterPro"/>
</dbReference>
<dbReference type="CDD" id="cd02439">
    <property type="entry name" value="DMB-PRT_CobT"/>
    <property type="match status" value="1"/>
</dbReference>
<dbReference type="Gene3D" id="3.40.50.10210">
    <property type="match status" value="1"/>
</dbReference>
<dbReference type="HAMAP" id="MF_01086">
    <property type="entry name" value="UPF0284"/>
    <property type="match status" value="1"/>
</dbReference>
<dbReference type="InterPro" id="IPR003200">
    <property type="entry name" value="Nict_dMeBzImd_PRibTrfase"/>
</dbReference>
<dbReference type="InterPro" id="IPR002805">
    <property type="entry name" value="Nict_dMeBzImd_PRibTrfase_arc"/>
</dbReference>
<dbReference type="InterPro" id="IPR036087">
    <property type="entry name" value="Nict_dMeBzImd_PRibTrfase_sf"/>
</dbReference>
<dbReference type="NCBIfam" id="NF003369">
    <property type="entry name" value="PRK04447.1-2"/>
    <property type="match status" value="1"/>
</dbReference>
<dbReference type="PANTHER" id="PTHR38811">
    <property type="match status" value="1"/>
</dbReference>
<dbReference type="PANTHER" id="PTHR38811:SF1">
    <property type="entry name" value="UPF0284 PROTEIN SLL1500"/>
    <property type="match status" value="1"/>
</dbReference>
<dbReference type="Pfam" id="PF02277">
    <property type="entry name" value="DBI_PRT"/>
    <property type="match status" value="1"/>
</dbReference>
<dbReference type="SUPFAM" id="SSF52733">
    <property type="entry name" value="Nicotinate mononucleotide:5,6-dimethylbenzimidazole phosphoribosyltransferase (CobT)"/>
    <property type="match status" value="1"/>
</dbReference>